<evidence type="ECO:0000250" key="1"/>
<evidence type="ECO:0000255" key="2">
    <source>
        <dbReference type="PROSITE-ProRule" id="PRU00404"/>
    </source>
</evidence>
<evidence type="ECO:0000255" key="3">
    <source>
        <dbReference type="PROSITE-ProRule" id="PRU01077"/>
    </source>
</evidence>
<evidence type="ECO:0000256" key="4">
    <source>
        <dbReference type="SAM" id="MobiDB-lite"/>
    </source>
</evidence>
<evidence type="ECO:0000269" key="5">
    <source>
    </source>
</evidence>
<evidence type="ECO:0000269" key="6">
    <source>
    </source>
</evidence>
<evidence type="ECO:0000305" key="7"/>
<accession>O43059</accession>
<protein>
    <recommendedName>
        <fullName>Cytoskeletal protein syp1</fullName>
    </recommendedName>
</protein>
<keyword id="KW-0131">Cell cycle</keyword>
<keyword id="KW-0175">Coiled coil</keyword>
<keyword id="KW-0963">Cytoplasm</keyword>
<keyword id="KW-0206">Cytoskeleton</keyword>
<keyword id="KW-0254">Endocytosis</keyword>
<keyword id="KW-0597">Phosphoprotein</keyword>
<keyword id="KW-1185">Reference proteome</keyword>
<proteinExistence type="evidence at protein level"/>
<feature type="chain" id="PRO_0000303951" description="Cytoskeletal protein syp1">
    <location>
        <begin position="1"/>
        <end position="818"/>
    </location>
</feature>
<feature type="domain" description="F-BAR" evidence="3">
    <location>
        <begin position="7"/>
        <end position="269"/>
    </location>
</feature>
<feature type="domain" description="MHD" evidence="2">
    <location>
        <begin position="551"/>
        <end position="807"/>
    </location>
</feature>
<feature type="region of interest" description="Disordered" evidence="4">
    <location>
        <begin position="142"/>
        <end position="163"/>
    </location>
</feature>
<feature type="region of interest" description="Disordered" evidence="4">
    <location>
        <begin position="239"/>
        <end position="374"/>
    </location>
</feature>
<feature type="region of interest" description="Disordered" evidence="4">
    <location>
        <begin position="403"/>
        <end position="441"/>
    </location>
</feature>
<feature type="region of interest" description="Disordered" evidence="4">
    <location>
        <begin position="456"/>
        <end position="481"/>
    </location>
</feature>
<feature type="compositionally biased region" description="Low complexity" evidence="4">
    <location>
        <begin position="240"/>
        <end position="251"/>
    </location>
</feature>
<feature type="compositionally biased region" description="Basic and acidic residues" evidence="4">
    <location>
        <begin position="259"/>
        <end position="273"/>
    </location>
</feature>
<feature type="compositionally biased region" description="Basic residues" evidence="4">
    <location>
        <begin position="283"/>
        <end position="301"/>
    </location>
</feature>
<feature type="compositionally biased region" description="Low complexity" evidence="4">
    <location>
        <begin position="310"/>
        <end position="322"/>
    </location>
</feature>
<feature type="compositionally biased region" description="Basic and acidic residues" evidence="4">
    <location>
        <begin position="323"/>
        <end position="352"/>
    </location>
</feature>
<feature type="compositionally biased region" description="Polar residues" evidence="4">
    <location>
        <begin position="353"/>
        <end position="366"/>
    </location>
</feature>
<feature type="compositionally biased region" description="Polar residues" evidence="4">
    <location>
        <begin position="403"/>
        <end position="431"/>
    </location>
</feature>
<feature type="compositionally biased region" description="Low complexity" evidence="4">
    <location>
        <begin position="459"/>
        <end position="476"/>
    </location>
</feature>
<feature type="modified residue" description="Phosphothreonine" evidence="5">
    <location>
        <position position="463"/>
    </location>
</feature>
<comment type="function">
    <text evidence="1">Multi-functional protein that contributes to the endocytic process, but also to events that occur at the neck during cytokinesis. Plays a role as an endocytic adapters with membrane-tubulation activity that associates with transmembrane cargo proteins and initiates the formation of endocytic sites. Contributes to the stabilization of the nascent clathrin-coated pit. Also plays a role in late endocytosis by mediating vesiculation. Involved in the regulation of cell cycle-dependent dynamics of the septin cytoskeleton by promoting septin turnover in different cell cycle stages (By similarity).</text>
</comment>
<comment type="subunit">
    <text evidence="6">Interacts with dil1.</text>
</comment>
<comment type="subcellular location">
    <subcellularLocation>
        <location evidence="1">Cytoplasm</location>
        <location evidence="1">Cytoskeleton</location>
    </subcellularLocation>
</comment>
<comment type="similarity">
    <text evidence="7">Belongs to the SYP1 family.</text>
</comment>
<reference key="1">
    <citation type="journal article" date="2002" name="Nature">
        <title>The genome sequence of Schizosaccharomyces pombe.</title>
        <authorList>
            <person name="Wood V."/>
            <person name="Gwilliam R."/>
            <person name="Rajandream M.A."/>
            <person name="Lyne M.H."/>
            <person name="Lyne R."/>
            <person name="Stewart A."/>
            <person name="Sgouros J.G."/>
            <person name="Peat N."/>
            <person name="Hayles J."/>
            <person name="Baker S.G."/>
            <person name="Basham D."/>
            <person name="Bowman S."/>
            <person name="Brooks K."/>
            <person name="Brown D."/>
            <person name="Brown S."/>
            <person name="Chillingworth T."/>
            <person name="Churcher C.M."/>
            <person name="Collins M."/>
            <person name="Connor R."/>
            <person name="Cronin A."/>
            <person name="Davis P."/>
            <person name="Feltwell T."/>
            <person name="Fraser A."/>
            <person name="Gentles S."/>
            <person name="Goble A."/>
            <person name="Hamlin N."/>
            <person name="Harris D.E."/>
            <person name="Hidalgo J."/>
            <person name="Hodgson G."/>
            <person name="Holroyd S."/>
            <person name="Hornsby T."/>
            <person name="Howarth S."/>
            <person name="Huckle E.J."/>
            <person name="Hunt S."/>
            <person name="Jagels K."/>
            <person name="James K.D."/>
            <person name="Jones L."/>
            <person name="Jones M."/>
            <person name="Leather S."/>
            <person name="McDonald S."/>
            <person name="McLean J."/>
            <person name="Mooney P."/>
            <person name="Moule S."/>
            <person name="Mungall K.L."/>
            <person name="Murphy L.D."/>
            <person name="Niblett D."/>
            <person name="Odell C."/>
            <person name="Oliver K."/>
            <person name="O'Neil S."/>
            <person name="Pearson D."/>
            <person name="Quail M.A."/>
            <person name="Rabbinowitsch E."/>
            <person name="Rutherford K.M."/>
            <person name="Rutter S."/>
            <person name="Saunders D."/>
            <person name="Seeger K."/>
            <person name="Sharp S."/>
            <person name="Skelton J."/>
            <person name="Simmonds M.N."/>
            <person name="Squares R."/>
            <person name="Squares S."/>
            <person name="Stevens K."/>
            <person name="Taylor K."/>
            <person name="Taylor R.G."/>
            <person name="Tivey A."/>
            <person name="Walsh S.V."/>
            <person name="Warren T."/>
            <person name="Whitehead S."/>
            <person name="Woodward J.R."/>
            <person name="Volckaert G."/>
            <person name="Aert R."/>
            <person name="Robben J."/>
            <person name="Grymonprez B."/>
            <person name="Weltjens I."/>
            <person name="Vanstreels E."/>
            <person name="Rieger M."/>
            <person name="Schaefer M."/>
            <person name="Mueller-Auer S."/>
            <person name="Gabel C."/>
            <person name="Fuchs M."/>
            <person name="Duesterhoeft A."/>
            <person name="Fritzc C."/>
            <person name="Holzer E."/>
            <person name="Moestl D."/>
            <person name="Hilbert H."/>
            <person name="Borzym K."/>
            <person name="Langer I."/>
            <person name="Beck A."/>
            <person name="Lehrach H."/>
            <person name="Reinhardt R."/>
            <person name="Pohl T.M."/>
            <person name="Eger P."/>
            <person name="Zimmermann W."/>
            <person name="Wedler H."/>
            <person name="Wambutt R."/>
            <person name="Purnelle B."/>
            <person name="Goffeau A."/>
            <person name="Cadieu E."/>
            <person name="Dreano S."/>
            <person name="Gloux S."/>
            <person name="Lelaure V."/>
            <person name="Mottier S."/>
            <person name="Galibert F."/>
            <person name="Aves S.J."/>
            <person name="Xiang Z."/>
            <person name="Hunt C."/>
            <person name="Moore K."/>
            <person name="Hurst S.M."/>
            <person name="Lucas M."/>
            <person name="Rochet M."/>
            <person name="Gaillardin C."/>
            <person name="Tallada V.A."/>
            <person name="Garzon A."/>
            <person name="Thode G."/>
            <person name="Daga R.R."/>
            <person name="Cruzado L."/>
            <person name="Jimenez J."/>
            <person name="Sanchez M."/>
            <person name="del Rey F."/>
            <person name="Benito J."/>
            <person name="Dominguez A."/>
            <person name="Revuelta J.L."/>
            <person name="Moreno S."/>
            <person name="Armstrong J."/>
            <person name="Forsburg S.L."/>
            <person name="Cerutti L."/>
            <person name="Lowe T."/>
            <person name="McCombie W.R."/>
            <person name="Paulsen I."/>
            <person name="Potashkin J."/>
            <person name="Shpakovski G.V."/>
            <person name="Ussery D."/>
            <person name="Barrell B.G."/>
            <person name="Nurse P."/>
        </authorList>
    </citation>
    <scope>NUCLEOTIDE SEQUENCE [LARGE SCALE GENOMIC DNA]</scope>
    <source>
        <strain>972 / ATCC 24843</strain>
    </source>
</reference>
<reference key="2">
    <citation type="journal article" date="2008" name="J. Proteome Res.">
        <title>Phosphoproteome analysis of fission yeast.</title>
        <authorList>
            <person name="Wilson-Grady J.T."/>
            <person name="Villen J."/>
            <person name="Gygi S.P."/>
        </authorList>
    </citation>
    <scope>PHOSPHORYLATION [LARGE SCALE ANALYSIS] AT THR-463</scope>
    <scope>IDENTIFICATION BY MASS SPECTROMETRY</scope>
</reference>
<reference key="3">
    <citation type="journal article" date="2010" name="Cell Cycle">
        <title>High-throughput knockout screen in Schizosaccharomyces pombe identifies a novel gene required for efficient homolog disjunction during meiosis I.</title>
        <authorList>
            <person name="Rumpf C."/>
            <person name="Cipak L."/>
            <person name="Novatchkova M."/>
            <person name="Li Z."/>
            <person name="Polakova S."/>
            <person name="Dudas A."/>
            <person name="Kovacikova I."/>
            <person name="Miadokova E."/>
            <person name="Ammerer G."/>
            <person name="Gregan J."/>
        </authorList>
    </citation>
    <scope>IDENTIFICATION BY MASS SPECTROMETRY</scope>
    <scope>INTERACTION WITH DIL1</scope>
</reference>
<organism>
    <name type="scientific">Schizosaccharomyces pombe (strain 972 / ATCC 24843)</name>
    <name type="common">Fission yeast</name>
    <dbReference type="NCBI Taxonomy" id="284812"/>
    <lineage>
        <taxon>Eukaryota</taxon>
        <taxon>Fungi</taxon>
        <taxon>Dikarya</taxon>
        <taxon>Ascomycota</taxon>
        <taxon>Taphrinomycotina</taxon>
        <taxon>Schizosaccharomycetes</taxon>
        <taxon>Schizosaccharomycetales</taxon>
        <taxon>Schizosaccharomycetaceae</taxon>
        <taxon>Schizosaccharomyces</taxon>
    </lineage>
</organism>
<name>SYP1_SCHPO</name>
<sequence>MESLTKTEYVDAFLSNYSPNDSMSIFRQRLEQVRLDNDMLSQWIRERMDIERQYSDQLHKLAMNMQEKNNSSFAFNYAWKQLEGETLEISRYHSQIIGQIASQVYKPLIDYYTSSPQTATLRRLAERLSTVAEEMASSSVPGLKGLKKKGRDADTKSQNDLTASRATWDSDAPLAFEKLQIVDEERLLILKQVYLTIASLETDTALKQQEFFSKSMAVYSDLPIEGEIRQFMNSTSKVMSSASANKPSKSSGFHINNGKSKEEKSHGENESGGKLKNKMSTLFRRKTIMPKKDKKPSHKSNGRPNKLTAFFNKNSKASSISSAEEHPSNIDDSSIERRHYDSNHSSQIRDHPSTNNNASSYQNFNETSDEGEDNDATIRANNVRSSFLEAPLPVQPNVQAETVTPKISSKASPFNKPNSVHSEASRNTPSSIDRENASHSNPIMMHGNDFGGNFNNMQSRSTTTSPTSAVASPAPTENEDSNAAIERVANTLRKNPTISRRTRRAGTMDRYATASSDYMESNLGSLPNLSTLSLQSGPDSTATWHPEFPNSSGLSASIVEKYSGELSEDGLLHPSCSGHIFMKYTSDFNTPPPEMGVRVASEFPMSFTHLNDHAVKYGPSENTLSLIPELLLSPIKVTDFNLHLDSINGASCIPLTVVQKWKHDESSSSMIAFVKPNPVWRNLGSSLHIEKLVIIVYLGENVLVKSCQSSPAGEFSRKTSKLKLHLSNINISSSGFKILAKFAISPSAAIRKPVIEFRIRMVDSSNNPGLTKLFLKPDMFDTTSSSGGSQLESAYEETKVPTSYGIHVRECSVFADMS</sequence>
<gene>
    <name type="primary">syp1</name>
    <name type="ORF">SPBC4C3.06</name>
</gene>
<dbReference type="EMBL" id="CU329671">
    <property type="protein sequence ID" value="CAA16828.1"/>
    <property type="molecule type" value="Genomic_DNA"/>
</dbReference>
<dbReference type="PIR" id="T40491">
    <property type="entry name" value="T40491"/>
</dbReference>
<dbReference type="RefSeq" id="NP_596299.1">
    <property type="nucleotide sequence ID" value="NM_001022220.2"/>
</dbReference>
<dbReference type="SMR" id="O43059"/>
<dbReference type="BioGRID" id="277379">
    <property type="interactions" value="9"/>
</dbReference>
<dbReference type="FunCoup" id="O43059">
    <property type="interactions" value="18"/>
</dbReference>
<dbReference type="IntAct" id="O43059">
    <property type="interactions" value="1"/>
</dbReference>
<dbReference type="STRING" id="284812.O43059"/>
<dbReference type="iPTMnet" id="O43059"/>
<dbReference type="PaxDb" id="4896-SPBC4C3.06.1"/>
<dbReference type="EnsemblFungi" id="SPBC4C3.06.1">
    <property type="protein sequence ID" value="SPBC4C3.06.1:pep"/>
    <property type="gene ID" value="SPBC4C3.06"/>
</dbReference>
<dbReference type="GeneID" id="2540862"/>
<dbReference type="KEGG" id="spo:2540862"/>
<dbReference type="PomBase" id="SPBC4C3.06">
    <property type="gene designation" value="syp1"/>
</dbReference>
<dbReference type="VEuPathDB" id="FungiDB:SPBC4C3.06"/>
<dbReference type="eggNOG" id="ENOG502RS0E">
    <property type="taxonomic scope" value="Eukaryota"/>
</dbReference>
<dbReference type="HOGENOM" id="CLU_011037_0_0_1"/>
<dbReference type="InParanoid" id="O43059"/>
<dbReference type="OMA" id="NRITWRY"/>
<dbReference type="PhylomeDB" id="O43059"/>
<dbReference type="Reactome" id="R-SPO-8856828">
    <property type="pathway name" value="Clathrin-mediated endocytosis"/>
</dbReference>
<dbReference type="PRO" id="PR:O43059"/>
<dbReference type="Proteomes" id="UP000002485">
    <property type="component" value="Chromosome II"/>
</dbReference>
<dbReference type="GO" id="GO:0030479">
    <property type="term" value="C:actin cortical patch"/>
    <property type="evidence" value="ECO:0000314"/>
    <property type="project" value="PomBase"/>
</dbReference>
<dbReference type="GO" id="GO:0032153">
    <property type="term" value="C:cell division site"/>
    <property type="evidence" value="ECO:0000318"/>
    <property type="project" value="GO_Central"/>
</dbReference>
<dbReference type="GO" id="GO:0005737">
    <property type="term" value="C:cytoplasm"/>
    <property type="evidence" value="ECO:0000318"/>
    <property type="project" value="GO_Central"/>
</dbReference>
<dbReference type="GO" id="GO:0030139">
    <property type="term" value="C:endocytic vesicle"/>
    <property type="evidence" value="ECO:0000314"/>
    <property type="project" value="PomBase"/>
</dbReference>
<dbReference type="GO" id="GO:0140312">
    <property type="term" value="F:cargo adaptor activity"/>
    <property type="evidence" value="ECO:0000304"/>
    <property type="project" value="PomBase"/>
</dbReference>
<dbReference type="GO" id="GO:0000147">
    <property type="term" value="P:actin cortical patch assembly"/>
    <property type="evidence" value="ECO:0000266"/>
    <property type="project" value="PomBase"/>
</dbReference>
<dbReference type="GO" id="GO:0072583">
    <property type="term" value="P:clathrin-dependent endocytosis"/>
    <property type="evidence" value="ECO:0000266"/>
    <property type="project" value="PomBase"/>
</dbReference>
<dbReference type="GO" id="GO:0032185">
    <property type="term" value="P:septin cytoskeleton organization"/>
    <property type="evidence" value="ECO:0000318"/>
    <property type="project" value="GO_Central"/>
</dbReference>
<dbReference type="CDD" id="cd09264">
    <property type="entry name" value="AP_Syp1_MHD"/>
    <property type="match status" value="1"/>
</dbReference>
<dbReference type="CDD" id="cd07650">
    <property type="entry name" value="F-BAR_Syp1p_like"/>
    <property type="match status" value="1"/>
</dbReference>
<dbReference type="FunFam" id="1.20.1270.60:FF:000102">
    <property type="entry name" value="WGS project CABT00000000 data, contig 2.23"/>
    <property type="match status" value="1"/>
</dbReference>
<dbReference type="Gene3D" id="1.20.1270.60">
    <property type="entry name" value="Arfaptin homology (AH) domain/BAR domain"/>
    <property type="match status" value="1"/>
</dbReference>
<dbReference type="InterPro" id="IPR027267">
    <property type="entry name" value="AH/BAR_dom_sf"/>
</dbReference>
<dbReference type="InterPro" id="IPR031160">
    <property type="entry name" value="F_BAR"/>
</dbReference>
<dbReference type="InterPro" id="IPR001060">
    <property type="entry name" value="FCH_dom"/>
</dbReference>
<dbReference type="InterPro" id="IPR028565">
    <property type="entry name" value="MHD"/>
</dbReference>
<dbReference type="InterPro" id="IPR018808">
    <property type="entry name" value="Muniscin_C"/>
</dbReference>
<dbReference type="InterPro" id="IPR049609">
    <property type="entry name" value="Syp1-like_MHD"/>
</dbReference>
<dbReference type="PANTHER" id="PTHR23065">
    <property type="entry name" value="PROLINE-SERINE-THREONINE PHOSPHATASE INTERACTING PROTEIN 1"/>
    <property type="match status" value="1"/>
</dbReference>
<dbReference type="PANTHER" id="PTHR23065:SF54">
    <property type="entry name" value="SUPPRESSOR OF YEAST PROFILIN DELETION"/>
    <property type="match status" value="1"/>
</dbReference>
<dbReference type="Pfam" id="PF00611">
    <property type="entry name" value="FCH"/>
    <property type="match status" value="1"/>
</dbReference>
<dbReference type="Pfam" id="PF10291">
    <property type="entry name" value="muHD"/>
    <property type="match status" value="1"/>
</dbReference>
<dbReference type="SMART" id="SM00055">
    <property type="entry name" value="FCH"/>
    <property type="match status" value="1"/>
</dbReference>
<dbReference type="SUPFAM" id="SSF103657">
    <property type="entry name" value="BAR/IMD domain-like"/>
    <property type="match status" value="1"/>
</dbReference>
<dbReference type="PROSITE" id="PS51741">
    <property type="entry name" value="F_BAR"/>
    <property type="match status" value="1"/>
</dbReference>
<dbReference type="PROSITE" id="PS51072">
    <property type="entry name" value="MHD"/>
    <property type="match status" value="1"/>
</dbReference>